<comment type="function">
    <text evidence="1 3">Putative amino acid transporter (By similarity). Involved in maintaining the osmotic homeostasis of the digestive vacuole (PubMed:36976018). Important for the timely development and growth of the asexual-stage parasites and male gametocyte maturation (PubMed:36976018).</text>
</comment>
<comment type="subcellular location">
    <subcellularLocation>
        <location evidence="3">Vacuole membrane</location>
        <topology evidence="2">Multi-pass membrane protein</topology>
    </subcellularLocation>
</comment>
<comment type="disruption phenotype">
    <text evidence="3">Growth of the asexual-stage parasites and maturation of male gametocytes are delayed (PubMed:36976018). Parasites are less virulent, their growth does not result in the development of cerebral malaria and causes less neuronal inflammation and cerebral complications (PubMed:36976018). Asexual-stage parasites have swollen food vacuoles containing altered range of hemoglobin-derived peptides and less hemozoin crystals that are also thinner (PubMed:36976018). Swollen vacuoles are also detectable in the male and female gametocytes (PubMed:36976018). Parasites exhibit lower sensitivity to quinolines (PubMed:36976018). No significant effects on sexual- and liver-stage development of parasites (PubMed:36976018).</text>
</comment>
<comment type="miscellaneous">
    <text evidence="1">Can transport antimalarial drugs.</text>
</comment>
<comment type="similarity">
    <text evidence="5">Belongs to the amino acid/polyamine transporter 2 family.</text>
</comment>
<organism evidence="7">
    <name type="scientific">Plasmodium berghei (strain Anka)</name>
    <dbReference type="NCBI Taxonomy" id="5823"/>
    <lineage>
        <taxon>Eukaryota</taxon>
        <taxon>Sar</taxon>
        <taxon>Alveolata</taxon>
        <taxon>Apicomplexa</taxon>
        <taxon>Aconoidasida</taxon>
        <taxon>Haemosporida</taxon>
        <taxon>Plasmodiidae</taxon>
        <taxon>Plasmodium</taxon>
        <taxon>Plasmodium (Vinckeia)</taxon>
    </lineage>
</organism>
<feature type="chain" id="PRO_0000460270" description="Putative amino acid transporter AAT1">
    <location>
        <begin position="1"/>
        <end position="614"/>
    </location>
</feature>
<feature type="transmembrane region" description="Helical" evidence="2">
    <location>
        <begin position="184"/>
        <end position="216"/>
    </location>
</feature>
<feature type="transmembrane region" description="Helical" evidence="2">
    <location>
        <begin position="222"/>
        <end position="243"/>
    </location>
</feature>
<feature type="transmembrane region" description="Helical" evidence="2">
    <location>
        <begin position="255"/>
        <end position="275"/>
    </location>
</feature>
<feature type="transmembrane region" description="Helical" evidence="2">
    <location>
        <begin position="295"/>
        <end position="311"/>
    </location>
</feature>
<feature type="transmembrane region" description="Helical" evidence="2">
    <location>
        <begin position="318"/>
        <end position="340"/>
    </location>
</feature>
<feature type="transmembrane region" description="Helical" evidence="2">
    <location>
        <begin position="360"/>
        <end position="380"/>
    </location>
</feature>
<feature type="transmembrane region" description="Helical" evidence="2">
    <location>
        <begin position="401"/>
        <end position="417"/>
    </location>
</feature>
<feature type="transmembrane region" description="Helical" evidence="2">
    <location>
        <begin position="437"/>
        <end position="459"/>
    </location>
</feature>
<feature type="transmembrane region" description="Helical" evidence="2">
    <location>
        <begin position="531"/>
        <end position="547"/>
    </location>
</feature>
<feature type="transmembrane region" description="Helical" evidence="2">
    <location>
        <begin position="553"/>
        <end position="575"/>
    </location>
</feature>
<feature type="transmembrane region" description="Helical" evidence="2">
    <location>
        <begin position="587"/>
        <end position="613"/>
    </location>
</feature>
<accession>A0A509AMM2</accession>
<reference evidence="7" key="1">
    <citation type="journal article" date="2014" name="BMC Biol.">
        <title>A comprehensive evaluation of rodent malaria parasite genomes and gene expression.</title>
        <authorList>
            <person name="Otto T.D."/>
            <person name="Bohme U."/>
            <person name="Jackson A.P."/>
            <person name="Hunt M."/>
            <person name="Franke-Fayard B."/>
            <person name="Hoeijmakers W.A."/>
            <person name="Religa A.A."/>
            <person name="Robertson L."/>
            <person name="Sanders M."/>
            <person name="Ogun S.A."/>
            <person name="Cunningham D."/>
            <person name="Erhart A."/>
            <person name="Billker O."/>
            <person name="Khan S.M."/>
            <person name="Stunnenberg H.G."/>
            <person name="Langhorne J."/>
            <person name="Holder A.A."/>
            <person name="Waters A.P."/>
            <person name="Newbold C.I."/>
            <person name="Pain A."/>
            <person name="Berriman M."/>
            <person name="Janse C.J."/>
        </authorList>
    </citation>
    <scope>NUCLEOTIDE SEQUENCE [LARGE SCALE GENOMIC DNA]</scope>
    <source>
        <strain evidence="7">ANKA</strain>
    </source>
</reference>
<reference evidence="5" key="2">
    <citation type="journal article" date="2023" name="Microbiol. Spectr.">
        <title>Significance of Plasmodium berghei Amino Acid Transporter 1 in Food Vacuole Functionality and Its Association with Cerebral Pathogenesis.</title>
        <authorList>
            <person name="Anand A."/>
            <person name="Chandana M."/>
            <person name="Ghosh S."/>
            <person name="Das R."/>
            <person name="Singh N."/>
            <person name="Vaishalli P.M."/>
            <person name="Gantasala N.P."/>
            <person name="Padmanaban G."/>
            <person name="Nagaraj V.A."/>
        </authorList>
    </citation>
    <scope>FUNCTION</scope>
    <scope>SUBCELLULAR LOCATION</scope>
    <scope>DISRUPTION PHENOTYPE</scope>
</reference>
<evidence type="ECO:0000250" key="1">
    <source>
        <dbReference type="UniProtKB" id="C6KTD0"/>
    </source>
</evidence>
<evidence type="ECO:0000255" key="2"/>
<evidence type="ECO:0000269" key="3">
    <source>
    </source>
</evidence>
<evidence type="ECO:0000303" key="4">
    <source>
    </source>
</evidence>
<evidence type="ECO:0000305" key="5"/>
<evidence type="ECO:0000312" key="6">
    <source>
        <dbReference type="EMBL" id="VUC56704.1"/>
    </source>
</evidence>
<evidence type="ECO:0000312" key="7">
    <source>
        <dbReference type="Proteomes" id="UP000074855"/>
    </source>
</evidence>
<name>AAT1_PLABA</name>
<protein>
    <recommendedName>
        <fullName evidence="6">Putative amino acid transporter AAT1</fullName>
        <shortName evidence="4">PbAAT1</shortName>
    </recommendedName>
</protein>
<keyword id="KW-0029">Amino-acid transport</keyword>
<keyword id="KW-0472">Membrane</keyword>
<keyword id="KW-1185">Reference proteome</keyword>
<keyword id="KW-0812">Transmembrane</keyword>
<keyword id="KW-1133">Transmembrane helix</keyword>
<keyword id="KW-0813">Transport</keyword>
<keyword id="KW-0926">Vacuole</keyword>
<dbReference type="EMBL" id="LK023126">
    <property type="protein sequence ID" value="VUC56704.1"/>
    <property type="molecule type" value="Genomic_DNA"/>
</dbReference>
<dbReference type="FunCoup" id="A0A509AMM2">
    <property type="interactions" value="2"/>
</dbReference>
<dbReference type="STRING" id="5823.A0A509AMM2"/>
<dbReference type="VEuPathDB" id="PlasmoDB:PBANKA_1128300"/>
<dbReference type="InParanoid" id="A0A509AMM2"/>
<dbReference type="OMA" id="YHKTIID"/>
<dbReference type="Proteomes" id="UP000074855">
    <property type="component" value="Chromosome 11"/>
</dbReference>
<dbReference type="GO" id="GO:0005774">
    <property type="term" value="C:vacuolar membrane"/>
    <property type="evidence" value="ECO:0007669"/>
    <property type="project" value="UniProtKB-SubCell"/>
</dbReference>
<dbReference type="GO" id="GO:0061459">
    <property type="term" value="F:L-arginine transmembrane transporter activity"/>
    <property type="evidence" value="ECO:0007669"/>
    <property type="project" value="TreeGrafter"/>
</dbReference>
<dbReference type="GO" id="GO:0005313">
    <property type="term" value="F:L-glutamate transmembrane transporter activity"/>
    <property type="evidence" value="ECO:0007669"/>
    <property type="project" value="TreeGrafter"/>
</dbReference>
<dbReference type="GO" id="GO:0005290">
    <property type="term" value="F:L-histidine transmembrane transporter activity"/>
    <property type="evidence" value="ECO:0007669"/>
    <property type="project" value="TreeGrafter"/>
</dbReference>
<dbReference type="GO" id="GO:0015189">
    <property type="term" value="F:L-lysine transmembrane transporter activity"/>
    <property type="evidence" value="ECO:0007669"/>
    <property type="project" value="TreeGrafter"/>
</dbReference>
<dbReference type="GO" id="GO:0015194">
    <property type="term" value="F:L-serine transmembrane transporter activity"/>
    <property type="evidence" value="ECO:0007669"/>
    <property type="project" value="TreeGrafter"/>
</dbReference>
<dbReference type="GO" id="GO:0005302">
    <property type="term" value="F:L-tyrosine transmembrane transporter activity"/>
    <property type="evidence" value="ECO:0007669"/>
    <property type="project" value="TreeGrafter"/>
</dbReference>
<dbReference type="InterPro" id="IPR013057">
    <property type="entry name" value="AA_transpt_TM"/>
</dbReference>
<dbReference type="PANTHER" id="PTHR22950">
    <property type="entry name" value="AMINO ACID TRANSPORTER"/>
    <property type="match status" value="1"/>
</dbReference>
<dbReference type="PANTHER" id="PTHR22950:SF678">
    <property type="entry name" value="VACUOLAR AMINO ACID TRANSPORTER 5-RELATED"/>
    <property type="match status" value="1"/>
</dbReference>
<dbReference type="Pfam" id="PF01490">
    <property type="entry name" value="Aa_trans"/>
    <property type="match status" value="1"/>
</dbReference>
<gene>
    <name evidence="5" type="primary">AAT1</name>
    <name evidence="6" type="ORF">PBANKA_1128300</name>
</gene>
<proteinExistence type="inferred from homology"/>
<sequence>MANNIDILDYCHSTNDVVQNIVNYKKNNDNYNYLEKHDDENAGISKNNIGVNSNYNRVFVFNNKRGDETKQIDTNMESITPYININSLESTKKINLVDESSKNYNMGNNWYHQNKYNNKMNNSKNSKNSHNKHISIAHIKYDDQEINEKGKNKLYEENQTNTKKTWKRRAFSPFTPGGVRSSTVLFLCTAIGVGLLSIPYVFSELGIILSIILILLNSLESYITTNILCMSSLEHNIFVYGNLLEKIGNKYYKTLIDFGLTFSFLSGYVLVLILVNDYLSNILYTFNFPSFISNRIFITIVICLLVLPLTFREHIGSINCFLVFSLFSITLTVLAVGYQSKYYMSLLPEKNISLFKINKHFFKCFNILLFSFSQQSNACFITGQFNQPTQRRVTKSESRSILIQVIFYTLFGLLGYLSFLNTTKDNIILNYEETNMSILLCKFFLCISFFFSIPLNFIATYPSMISLYTSIRNKIQKLYSVLFTRNEYLPSFSNILRYDTENPFDEYTLDENTENSSTSESQGDDMFQRKCAAIFVTCLCAFVEFNVSKLSNFIGIFGGFTSSIISCILPNLIYYKNMHTFKNKIERYATLALLCFFSVIGLISSIVTAFIIIY</sequence>